<reference key="1">
    <citation type="journal article" date="2007" name="PLoS ONE">
        <title>Molecular correlates of host specialization in Staphylococcus aureus.</title>
        <authorList>
            <person name="Herron-Olson L."/>
            <person name="Fitzgerald J.R."/>
            <person name="Musser J.M."/>
            <person name="Kapur V."/>
        </authorList>
    </citation>
    <scope>NUCLEOTIDE SEQUENCE [LARGE SCALE GENOMIC DNA]</scope>
    <source>
        <strain>bovine RF122 / ET3-1</strain>
    </source>
</reference>
<organism>
    <name type="scientific">Staphylococcus aureus (strain bovine RF122 / ET3-1)</name>
    <dbReference type="NCBI Taxonomy" id="273036"/>
    <lineage>
        <taxon>Bacteria</taxon>
        <taxon>Bacillati</taxon>
        <taxon>Bacillota</taxon>
        <taxon>Bacilli</taxon>
        <taxon>Bacillales</taxon>
        <taxon>Staphylococcaceae</taxon>
        <taxon>Staphylococcus</taxon>
    </lineage>
</organism>
<gene>
    <name evidence="1" type="primary">rpsM</name>
    <name type="ordered locus">SAB2099c</name>
</gene>
<feature type="chain" id="PRO_0000230567" description="Small ribosomal subunit protein uS13">
    <location>
        <begin position="1"/>
        <end position="121"/>
    </location>
</feature>
<feature type="region of interest" description="Disordered" evidence="2">
    <location>
        <begin position="91"/>
        <end position="121"/>
    </location>
</feature>
<sequence length="121" mass="13719">MARIAGVDIPREKRVVISLTYIYGIGTSTAQKILEEANVSADTRVKDLTDDELGRIREVVDGYKVEGDLRRETNLNIKRLMEISSYRGIRHRRGLPVRGQKTKNNARTRKGPVKTVANKKK</sequence>
<dbReference type="EMBL" id="AJ938182">
    <property type="protein sequence ID" value="CAI81788.1"/>
    <property type="molecule type" value="Genomic_DNA"/>
</dbReference>
<dbReference type="RefSeq" id="WP_000090796.1">
    <property type="nucleotide sequence ID" value="NC_007622.1"/>
</dbReference>
<dbReference type="PDB" id="6FXC">
    <property type="method" value="EM"/>
    <property type="resolution" value="6.76 A"/>
    <property type="chains" value="Am/Bm=1-121"/>
</dbReference>
<dbReference type="PDBsum" id="6FXC"/>
<dbReference type="EMDB" id="EMD-3637"/>
<dbReference type="SMR" id="Q2YYM0"/>
<dbReference type="GeneID" id="66840438"/>
<dbReference type="KEGG" id="sab:SAB2099c"/>
<dbReference type="HOGENOM" id="CLU_103849_1_1_9"/>
<dbReference type="GO" id="GO:0005829">
    <property type="term" value="C:cytosol"/>
    <property type="evidence" value="ECO:0007669"/>
    <property type="project" value="TreeGrafter"/>
</dbReference>
<dbReference type="GO" id="GO:0015935">
    <property type="term" value="C:small ribosomal subunit"/>
    <property type="evidence" value="ECO:0007669"/>
    <property type="project" value="TreeGrafter"/>
</dbReference>
<dbReference type="GO" id="GO:0019843">
    <property type="term" value="F:rRNA binding"/>
    <property type="evidence" value="ECO:0007669"/>
    <property type="project" value="UniProtKB-UniRule"/>
</dbReference>
<dbReference type="GO" id="GO:0003735">
    <property type="term" value="F:structural constituent of ribosome"/>
    <property type="evidence" value="ECO:0007669"/>
    <property type="project" value="InterPro"/>
</dbReference>
<dbReference type="GO" id="GO:0000049">
    <property type="term" value="F:tRNA binding"/>
    <property type="evidence" value="ECO:0007669"/>
    <property type="project" value="UniProtKB-UniRule"/>
</dbReference>
<dbReference type="GO" id="GO:0006412">
    <property type="term" value="P:translation"/>
    <property type="evidence" value="ECO:0007669"/>
    <property type="project" value="UniProtKB-UniRule"/>
</dbReference>
<dbReference type="FunFam" id="1.10.8.50:FF:000001">
    <property type="entry name" value="30S ribosomal protein S13"/>
    <property type="match status" value="1"/>
</dbReference>
<dbReference type="FunFam" id="4.10.910.10:FF:000001">
    <property type="entry name" value="30S ribosomal protein S13"/>
    <property type="match status" value="1"/>
</dbReference>
<dbReference type="Gene3D" id="1.10.8.50">
    <property type="match status" value="1"/>
</dbReference>
<dbReference type="Gene3D" id="4.10.910.10">
    <property type="entry name" value="30s ribosomal protein s13, domain 2"/>
    <property type="match status" value="1"/>
</dbReference>
<dbReference type="HAMAP" id="MF_01315">
    <property type="entry name" value="Ribosomal_uS13"/>
    <property type="match status" value="1"/>
</dbReference>
<dbReference type="InterPro" id="IPR027437">
    <property type="entry name" value="Rbsml_uS13_C"/>
</dbReference>
<dbReference type="InterPro" id="IPR001892">
    <property type="entry name" value="Ribosomal_uS13"/>
</dbReference>
<dbReference type="InterPro" id="IPR010979">
    <property type="entry name" value="Ribosomal_uS13-like_H2TH"/>
</dbReference>
<dbReference type="InterPro" id="IPR019980">
    <property type="entry name" value="Ribosomal_uS13_bac-type"/>
</dbReference>
<dbReference type="InterPro" id="IPR018269">
    <property type="entry name" value="Ribosomal_uS13_CS"/>
</dbReference>
<dbReference type="NCBIfam" id="TIGR03631">
    <property type="entry name" value="uS13_bact"/>
    <property type="match status" value="1"/>
</dbReference>
<dbReference type="PANTHER" id="PTHR10871">
    <property type="entry name" value="30S RIBOSOMAL PROTEIN S13/40S RIBOSOMAL PROTEIN S18"/>
    <property type="match status" value="1"/>
</dbReference>
<dbReference type="PANTHER" id="PTHR10871:SF1">
    <property type="entry name" value="SMALL RIBOSOMAL SUBUNIT PROTEIN US13M"/>
    <property type="match status" value="1"/>
</dbReference>
<dbReference type="Pfam" id="PF00416">
    <property type="entry name" value="Ribosomal_S13"/>
    <property type="match status" value="1"/>
</dbReference>
<dbReference type="PIRSF" id="PIRSF002134">
    <property type="entry name" value="Ribosomal_S13"/>
    <property type="match status" value="1"/>
</dbReference>
<dbReference type="SUPFAM" id="SSF46946">
    <property type="entry name" value="S13-like H2TH domain"/>
    <property type="match status" value="1"/>
</dbReference>
<dbReference type="PROSITE" id="PS00646">
    <property type="entry name" value="RIBOSOMAL_S13_1"/>
    <property type="match status" value="1"/>
</dbReference>
<dbReference type="PROSITE" id="PS50159">
    <property type="entry name" value="RIBOSOMAL_S13_2"/>
    <property type="match status" value="1"/>
</dbReference>
<name>RS13_STAAB</name>
<comment type="function">
    <text evidence="1">Located at the top of the head of the 30S subunit, it contacts several helices of the 16S rRNA. In the 70S ribosome it contacts the 23S rRNA (bridge B1a) and protein L5 of the 50S subunit (bridge B1b), connecting the 2 subunits; these bridges are implicated in subunit movement. Contacts the tRNAs in the A and P-sites.</text>
</comment>
<comment type="subunit">
    <text evidence="1">Part of the 30S ribosomal subunit. Forms a loose heterodimer with protein S19. Forms two bridges to the 50S subunit in the 70S ribosome.</text>
</comment>
<comment type="similarity">
    <text evidence="1">Belongs to the universal ribosomal protein uS13 family.</text>
</comment>
<evidence type="ECO:0000255" key="1">
    <source>
        <dbReference type="HAMAP-Rule" id="MF_01315"/>
    </source>
</evidence>
<evidence type="ECO:0000256" key="2">
    <source>
        <dbReference type="SAM" id="MobiDB-lite"/>
    </source>
</evidence>
<evidence type="ECO:0000305" key="3"/>
<accession>Q2YYM0</accession>
<protein>
    <recommendedName>
        <fullName evidence="1">Small ribosomal subunit protein uS13</fullName>
    </recommendedName>
    <alternativeName>
        <fullName evidence="3">30S ribosomal protein S13</fullName>
    </alternativeName>
</protein>
<proteinExistence type="evidence at protein level"/>
<keyword id="KW-0002">3D-structure</keyword>
<keyword id="KW-0687">Ribonucleoprotein</keyword>
<keyword id="KW-0689">Ribosomal protein</keyword>
<keyword id="KW-0694">RNA-binding</keyword>
<keyword id="KW-0699">rRNA-binding</keyword>
<keyword id="KW-0820">tRNA-binding</keyword>